<proteinExistence type="inferred from homology"/>
<protein>
    <recommendedName>
        <fullName evidence="1">Small ribosomal subunit protein bS6</fullName>
    </recommendedName>
    <alternativeName>
        <fullName evidence="2">30S ribosomal protein S6</fullName>
    </alternativeName>
</protein>
<name>RS6_STRTD</name>
<feature type="chain" id="PRO_1000005370" description="Small ribosomal subunit protein bS6">
    <location>
        <begin position="1"/>
        <end position="96"/>
    </location>
</feature>
<evidence type="ECO:0000255" key="1">
    <source>
        <dbReference type="HAMAP-Rule" id="MF_00360"/>
    </source>
</evidence>
<evidence type="ECO:0000305" key="2"/>
<sequence>MAKYEILYIIRPNIEEEAKNALVARFDSILTDNGATVVESKDWEKRRLAYEIQDFREGIYHVVNVEANDATALNEFDRLSKINGDILRHMIVKLDA</sequence>
<comment type="function">
    <text evidence="1">Binds together with bS18 to 16S ribosomal RNA.</text>
</comment>
<comment type="similarity">
    <text evidence="1">Belongs to the bacterial ribosomal protein bS6 family.</text>
</comment>
<keyword id="KW-0687">Ribonucleoprotein</keyword>
<keyword id="KW-0689">Ribosomal protein</keyword>
<keyword id="KW-0694">RNA-binding</keyword>
<keyword id="KW-0699">rRNA-binding</keyword>
<accession>Q03IV3</accession>
<reference key="1">
    <citation type="journal article" date="2006" name="Proc. Natl. Acad. Sci. U.S.A.">
        <title>Comparative genomics of the lactic acid bacteria.</title>
        <authorList>
            <person name="Makarova K.S."/>
            <person name="Slesarev A."/>
            <person name="Wolf Y.I."/>
            <person name="Sorokin A."/>
            <person name="Mirkin B."/>
            <person name="Koonin E.V."/>
            <person name="Pavlov A."/>
            <person name="Pavlova N."/>
            <person name="Karamychev V."/>
            <person name="Polouchine N."/>
            <person name="Shakhova V."/>
            <person name="Grigoriev I."/>
            <person name="Lou Y."/>
            <person name="Rohksar D."/>
            <person name="Lucas S."/>
            <person name="Huang K."/>
            <person name="Goodstein D.M."/>
            <person name="Hawkins T."/>
            <person name="Plengvidhya V."/>
            <person name="Welker D."/>
            <person name="Hughes J."/>
            <person name="Goh Y."/>
            <person name="Benson A."/>
            <person name="Baldwin K."/>
            <person name="Lee J.-H."/>
            <person name="Diaz-Muniz I."/>
            <person name="Dosti B."/>
            <person name="Smeianov V."/>
            <person name="Wechter W."/>
            <person name="Barabote R."/>
            <person name="Lorca G."/>
            <person name="Altermann E."/>
            <person name="Barrangou R."/>
            <person name="Ganesan B."/>
            <person name="Xie Y."/>
            <person name="Rawsthorne H."/>
            <person name="Tamir D."/>
            <person name="Parker C."/>
            <person name="Breidt F."/>
            <person name="Broadbent J.R."/>
            <person name="Hutkins R."/>
            <person name="O'Sullivan D."/>
            <person name="Steele J."/>
            <person name="Unlu G."/>
            <person name="Saier M.H. Jr."/>
            <person name="Klaenhammer T."/>
            <person name="Richardson P."/>
            <person name="Kozyavkin S."/>
            <person name="Weimer B.C."/>
            <person name="Mills D.A."/>
        </authorList>
    </citation>
    <scope>NUCLEOTIDE SEQUENCE [LARGE SCALE GENOMIC DNA]</scope>
    <source>
        <strain>ATCC BAA-491 / LMD-9</strain>
    </source>
</reference>
<gene>
    <name evidence="1" type="primary">rpsF</name>
    <name type="ordered locus">STER_1728</name>
</gene>
<dbReference type="EMBL" id="CP000419">
    <property type="protein sequence ID" value="ABJ66869.1"/>
    <property type="molecule type" value="Genomic_DNA"/>
</dbReference>
<dbReference type="RefSeq" id="WP_011681624.1">
    <property type="nucleotide sequence ID" value="NC_008532.1"/>
</dbReference>
<dbReference type="SMR" id="Q03IV3"/>
<dbReference type="KEGG" id="ste:STER_1728"/>
<dbReference type="HOGENOM" id="CLU_113441_5_3_9"/>
<dbReference type="GO" id="GO:0005737">
    <property type="term" value="C:cytoplasm"/>
    <property type="evidence" value="ECO:0007669"/>
    <property type="project" value="UniProtKB-ARBA"/>
</dbReference>
<dbReference type="GO" id="GO:1990904">
    <property type="term" value="C:ribonucleoprotein complex"/>
    <property type="evidence" value="ECO:0007669"/>
    <property type="project" value="UniProtKB-KW"/>
</dbReference>
<dbReference type="GO" id="GO:0005840">
    <property type="term" value="C:ribosome"/>
    <property type="evidence" value="ECO:0007669"/>
    <property type="project" value="UniProtKB-KW"/>
</dbReference>
<dbReference type="GO" id="GO:0070181">
    <property type="term" value="F:small ribosomal subunit rRNA binding"/>
    <property type="evidence" value="ECO:0007669"/>
    <property type="project" value="TreeGrafter"/>
</dbReference>
<dbReference type="GO" id="GO:0003735">
    <property type="term" value="F:structural constituent of ribosome"/>
    <property type="evidence" value="ECO:0007669"/>
    <property type="project" value="InterPro"/>
</dbReference>
<dbReference type="GO" id="GO:0006412">
    <property type="term" value="P:translation"/>
    <property type="evidence" value="ECO:0007669"/>
    <property type="project" value="UniProtKB-UniRule"/>
</dbReference>
<dbReference type="CDD" id="cd00473">
    <property type="entry name" value="bS6"/>
    <property type="match status" value="1"/>
</dbReference>
<dbReference type="FunFam" id="3.30.70.60:FF:000002">
    <property type="entry name" value="30S ribosomal protein S6"/>
    <property type="match status" value="1"/>
</dbReference>
<dbReference type="Gene3D" id="3.30.70.60">
    <property type="match status" value="1"/>
</dbReference>
<dbReference type="HAMAP" id="MF_00360">
    <property type="entry name" value="Ribosomal_bS6"/>
    <property type="match status" value="1"/>
</dbReference>
<dbReference type="InterPro" id="IPR000529">
    <property type="entry name" value="Ribosomal_bS6"/>
</dbReference>
<dbReference type="InterPro" id="IPR035980">
    <property type="entry name" value="Ribosomal_bS6_sf"/>
</dbReference>
<dbReference type="InterPro" id="IPR020814">
    <property type="entry name" value="Ribosomal_S6_plastid/chlpt"/>
</dbReference>
<dbReference type="InterPro" id="IPR014717">
    <property type="entry name" value="Transl_elong_EF1B/ribsomal_bS6"/>
</dbReference>
<dbReference type="NCBIfam" id="TIGR00166">
    <property type="entry name" value="S6"/>
    <property type="match status" value="1"/>
</dbReference>
<dbReference type="PANTHER" id="PTHR21011">
    <property type="entry name" value="MITOCHONDRIAL 28S RIBOSOMAL PROTEIN S6"/>
    <property type="match status" value="1"/>
</dbReference>
<dbReference type="PANTHER" id="PTHR21011:SF1">
    <property type="entry name" value="SMALL RIBOSOMAL SUBUNIT PROTEIN BS6M"/>
    <property type="match status" value="1"/>
</dbReference>
<dbReference type="Pfam" id="PF01250">
    <property type="entry name" value="Ribosomal_S6"/>
    <property type="match status" value="1"/>
</dbReference>
<dbReference type="SUPFAM" id="SSF54995">
    <property type="entry name" value="Ribosomal protein S6"/>
    <property type="match status" value="1"/>
</dbReference>
<organism>
    <name type="scientific">Streptococcus thermophilus (strain ATCC BAA-491 / LMD-9)</name>
    <dbReference type="NCBI Taxonomy" id="322159"/>
    <lineage>
        <taxon>Bacteria</taxon>
        <taxon>Bacillati</taxon>
        <taxon>Bacillota</taxon>
        <taxon>Bacilli</taxon>
        <taxon>Lactobacillales</taxon>
        <taxon>Streptococcaceae</taxon>
        <taxon>Streptococcus</taxon>
    </lineage>
</organism>